<protein>
    <recommendedName>
        <fullName evidence="1">Large ribosomal subunit protein uL1</fullName>
    </recommendedName>
    <alternativeName>
        <fullName evidence="2">50S ribosomal protein L1</fullName>
    </alternativeName>
</protein>
<accession>Q3K5X8</accession>
<sequence>MAKLTKRQKAIAEKIEAGKSYNFEEAATLLASLPAAKFVESFDVAVNLGVDPRKSDQVVRSATVLPHGTGKTVRVAVFTQGPAAEAALAAGADRVGMDELAAEMKGGDLNYDVVIASPDAMRVVGQLGQILGPRGLMPNPKVGTVTPDVATAVKNAKAGQVRYRTDKNGIIHTSVGKIGFDAVKLKENVEALIADLKRIKPASSKGIYVKRVTLSTTMGPGLVIDQSSLDA</sequence>
<dbReference type="EMBL" id="CP000094">
    <property type="protein sequence ID" value="ABA76826.1"/>
    <property type="molecule type" value="Genomic_DNA"/>
</dbReference>
<dbReference type="RefSeq" id="WP_011336175.1">
    <property type="nucleotide sequence ID" value="NC_007492.2"/>
</dbReference>
<dbReference type="SMR" id="Q3K5X8"/>
<dbReference type="KEGG" id="pfo:Pfl01_5089"/>
<dbReference type="eggNOG" id="COG0081">
    <property type="taxonomic scope" value="Bacteria"/>
</dbReference>
<dbReference type="HOGENOM" id="CLU_062853_0_0_6"/>
<dbReference type="Proteomes" id="UP000002704">
    <property type="component" value="Chromosome"/>
</dbReference>
<dbReference type="GO" id="GO:0022625">
    <property type="term" value="C:cytosolic large ribosomal subunit"/>
    <property type="evidence" value="ECO:0007669"/>
    <property type="project" value="TreeGrafter"/>
</dbReference>
<dbReference type="GO" id="GO:0019843">
    <property type="term" value="F:rRNA binding"/>
    <property type="evidence" value="ECO:0007669"/>
    <property type="project" value="UniProtKB-UniRule"/>
</dbReference>
<dbReference type="GO" id="GO:0003735">
    <property type="term" value="F:structural constituent of ribosome"/>
    <property type="evidence" value="ECO:0007669"/>
    <property type="project" value="InterPro"/>
</dbReference>
<dbReference type="GO" id="GO:0000049">
    <property type="term" value="F:tRNA binding"/>
    <property type="evidence" value="ECO:0007669"/>
    <property type="project" value="UniProtKB-KW"/>
</dbReference>
<dbReference type="GO" id="GO:0006417">
    <property type="term" value="P:regulation of translation"/>
    <property type="evidence" value="ECO:0007669"/>
    <property type="project" value="UniProtKB-KW"/>
</dbReference>
<dbReference type="GO" id="GO:0006412">
    <property type="term" value="P:translation"/>
    <property type="evidence" value="ECO:0007669"/>
    <property type="project" value="UniProtKB-UniRule"/>
</dbReference>
<dbReference type="CDD" id="cd00403">
    <property type="entry name" value="Ribosomal_L1"/>
    <property type="match status" value="1"/>
</dbReference>
<dbReference type="FunFam" id="3.40.50.790:FF:000001">
    <property type="entry name" value="50S ribosomal protein L1"/>
    <property type="match status" value="1"/>
</dbReference>
<dbReference type="Gene3D" id="3.30.190.20">
    <property type="match status" value="1"/>
</dbReference>
<dbReference type="Gene3D" id="3.40.50.790">
    <property type="match status" value="1"/>
</dbReference>
<dbReference type="HAMAP" id="MF_01318_B">
    <property type="entry name" value="Ribosomal_uL1_B"/>
    <property type="match status" value="1"/>
</dbReference>
<dbReference type="InterPro" id="IPR005878">
    <property type="entry name" value="Ribosom_uL1_bac-type"/>
</dbReference>
<dbReference type="InterPro" id="IPR002143">
    <property type="entry name" value="Ribosomal_uL1"/>
</dbReference>
<dbReference type="InterPro" id="IPR023674">
    <property type="entry name" value="Ribosomal_uL1-like"/>
</dbReference>
<dbReference type="InterPro" id="IPR028364">
    <property type="entry name" value="Ribosomal_uL1/biogenesis"/>
</dbReference>
<dbReference type="InterPro" id="IPR016095">
    <property type="entry name" value="Ribosomal_uL1_3-a/b-sand"/>
</dbReference>
<dbReference type="InterPro" id="IPR023673">
    <property type="entry name" value="Ribosomal_uL1_CS"/>
</dbReference>
<dbReference type="NCBIfam" id="TIGR01169">
    <property type="entry name" value="rplA_bact"/>
    <property type="match status" value="1"/>
</dbReference>
<dbReference type="PANTHER" id="PTHR36427">
    <property type="entry name" value="54S RIBOSOMAL PROTEIN L1, MITOCHONDRIAL"/>
    <property type="match status" value="1"/>
</dbReference>
<dbReference type="PANTHER" id="PTHR36427:SF3">
    <property type="entry name" value="LARGE RIBOSOMAL SUBUNIT PROTEIN UL1M"/>
    <property type="match status" value="1"/>
</dbReference>
<dbReference type="Pfam" id="PF00687">
    <property type="entry name" value="Ribosomal_L1"/>
    <property type="match status" value="1"/>
</dbReference>
<dbReference type="PIRSF" id="PIRSF002155">
    <property type="entry name" value="Ribosomal_L1"/>
    <property type="match status" value="1"/>
</dbReference>
<dbReference type="SUPFAM" id="SSF56808">
    <property type="entry name" value="Ribosomal protein L1"/>
    <property type="match status" value="1"/>
</dbReference>
<dbReference type="PROSITE" id="PS01199">
    <property type="entry name" value="RIBOSOMAL_L1"/>
    <property type="match status" value="1"/>
</dbReference>
<feature type="chain" id="PRO_0000230627" description="Large ribosomal subunit protein uL1">
    <location>
        <begin position="1"/>
        <end position="231"/>
    </location>
</feature>
<proteinExistence type="inferred from homology"/>
<gene>
    <name evidence="1" type="primary">rplA</name>
    <name type="ordered locus">Pfl01_5089</name>
</gene>
<comment type="function">
    <text evidence="1">Binds directly to 23S rRNA. The L1 stalk is quite mobile in the ribosome, and is involved in E site tRNA release.</text>
</comment>
<comment type="function">
    <text evidence="1">Protein L1 is also a translational repressor protein, it controls the translation of the L11 operon by binding to its mRNA.</text>
</comment>
<comment type="subunit">
    <text evidence="1">Part of the 50S ribosomal subunit.</text>
</comment>
<comment type="similarity">
    <text evidence="1">Belongs to the universal ribosomal protein uL1 family.</text>
</comment>
<name>RL1_PSEPF</name>
<organism>
    <name type="scientific">Pseudomonas fluorescens (strain Pf0-1)</name>
    <dbReference type="NCBI Taxonomy" id="205922"/>
    <lineage>
        <taxon>Bacteria</taxon>
        <taxon>Pseudomonadati</taxon>
        <taxon>Pseudomonadota</taxon>
        <taxon>Gammaproteobacteria</taxon>
        <taxon>Pseudomonadales</taxon>
        <taxon>Pseudomonadaceae</taxon>
        <taxon>Pseudomonas</taxon>
    </lineage>
</organism>
<reference key="1">
    <citation type="journal article" date="2009" name="Genome Biol.">
        <title>Genomic and genetic analyses of diversity and plant interactions of Pseudomonas fluorescens.</title>
        <authorList>
            <person name="Silby M.W."/>
            <person name="Cerdeno-Tarraga A.M."/>
            <person name="Vernikos G.S."/>
            <person name="Giddens S.R."/>
            <person name="Jackson R.W."/>
            <person name="Preston G.M."/>
            <person name="Zhang X.-X."/>
            <person name="Moon C.D."/>
            <person name="Gehrig S.M."/>
            <person name="Godfrey S.A.C."/>
            <person name="Knight C.G."/>
            <person name="Malone J.G."/>
            <person name="Robinson Z."/>
            <person name="Spiers A.J."/>
            <person name="Harris S."/>
            <person name="Challis G.L."/>
            <person name="Yaxley A.M."/>
            <person name="Harris D."/>
            <person name="Seeger K."/>
            <person name="Murphy L."/>
            <person name="Rutter S."/>
            <person name="Squares R."/>
            <person name="Quail M.A."/>
            <person name="Saunders E."/>
            <person name="Mavromatis K."/>
            <person name="Brettin T.S."/>
            <person name="Bentley S.D."/>
            <person name="Hothersall J."/>
            <person name="Stephens E."/>
            <person name="Thomas C.M."/>
            <person name="Parkhill J."/>
            <person name="Levy S.B."/>
            <person name="Rainey P.B."/>
            <person name="Thomson N.R."/>
        </authorList>
    </citation>
    <scope>NUCLEOTIDE SEQUENCE [LARGE SCALE GENOMIC DNA]</scope>
    <source>
        <strain>Pf0-1</strain>
    </source>
</reference>
<keyword id="KW-0678">Repressor</keyword>
<keyword id="KW-0687">Ribonucleoprotein</keyword>
<keyword id="KW-0689">Ribosomal protein</keyword>
<keyword id="KW-0694">RNA-binding</keyword>
<keyword id="KW-0699">rRNA-binding</keyword>
<keyword id="KW-0810">Translation regulation</keyword>
<keyword id="KW-0820">tRNA-binding</keyword>
<evidence type="ECO:0000255" key="1">
    <source>
        <dbReference type="HAMAP-Rule" id="MF_01318"/>
    </source>
</evidence>
<evidence type="ECO:0000305" key="2"/>